<comment type="function">
    <text evidence="1">Component of the mitochondrial ribosome (mitoribosome), a dedicated translation machinery responsible for the synthesis of mitochondrial genome-encoded proteins, including at least some of the essential transmembrane subunits of the mitochondrial respiratory chain. The mitoribosomes are attached to the mitochondrial inner membrane and translation products are cotranslationally integrated into the membrane.</text>
</comment>
<comment type="subunit">
    <text evidence="1">Component of the mitochondrial small ribosomal subunit (mt-SSU). Mature yeast 74S mitochondrial ribosomes consist of a small (37S) and a large (54S) subunit. The 37S small subunit contains a 15S ribosomal RNA (15S mt-rRNA) and at least 32 different proteins. The 54S large subunit contains a 21S rRNA (21S mt-rRNA) and at least 45 different proteins.</text>
</comment>
<comment type="subcellular location">
    <subcellularLocation>
        <location evidence="2">Mitochondrion</location>
    </subcellularLocation>
</comment>
<comment type="similarity">
    <text evidence="3">Belongs to the universal ribosomal protein uS19 family.</text>
</comment>
<accession>Q9US30</accession>
<reference key="1">
    <citation type="journal article" date="2002" name="Nature">
        <title>The genome sequence of Schizosaccharomyces pombe.</title>
        <authorList>
            <person name="Wood V."/>
            <person name="Gwilliam R."/>
            <person name="Rajandream M.A."/>
            <person name="Lyne M.H."/>
            <person name="Lyne R."/>
            <person name="Stewart A."/>
            <person name="Sgouros J.G."/>
            <person name="Peat N."/>
            <person name="Hayles J."/>
            <person name="Baker S.G."/>
            <person name="Basham D."/>
            <person name="Bowman S."/>
            <person name="Brooks K."/>
            <person name="Brown D."/>
            <person name="Brown S."/>
            <person name="Chillingworth T."/>
            <person name="Churcher C.M."/>
            <person name="Collins M."/>
            <person name="Connor R."/>
            <person name="Cronin A."/>
            <person name="Davis P."/>
            <person name="Feltwell T."/>
            <person name="Fraser A."/>
            <person name="Gentles S."/>
            <person name="Goble A."/>
            <person name="Hamlin N."/>
            <person name="Harris D.E."/>
            <person name="Hidalgo J."/>
            <person name="Hodgson G."/>
            <person name="Holroyd S."/>
            <person name="Hornsby T."/>
            <person name="Howarth S."/>
            <person name="Huckle E.J."/>
            <person name="Hunt S."/>
            <person name="Jagels K."/>
            <person name="James K.D."/>
            <person name="Jones L."/>
            <person name="Jones M."/>
            <person name="Leather S."/>
            <person name="McDonald S."/>
            <person name="McLean J."/>
            <person name="Mooney P."/>
            <person name="Moule S."/>
            <person name="Mungall K.L."/>
            <person name="Murphy L.D."/>
            <person name="Niblett D."/>
            <person name="Odell C."/>
            <person name="Oliver K."/>
            <person name="O'Neil S."/>
            <person name="Pearson D."/>
            <person name="Quail M.A."/>
            <person name="Rabbinowitsch E."/>
            <person name="Rutherford K.M."/>
            <person name="Rutter S."/>
            <person name="Saunders D."/>
            <person name="Seeger K."/>
            <person name="Sharp S."/>
            <person name="Skelton J."/>
            <person name="Simmonds M.N."/>
            <person name="Squares R."/>
            <person name="Squares S."/>
            <person name="Stevens K."/>
            <person name="Taylor K."/>
            <person name="Taylor R.G."/>
            <person name="Tivey A."/>
            <person name="Walsh S.V."/>
            <person name="Warren T."/>
            <person name="Whitehead S."/>
            <person name="Woodward J.R."/>
            <person name="Volckaert G."/>
            <person name="Aert R."/>
            <person name="Robben J."/>
            <person name="Grymonprez B."/>
            <person name="Weltjens I."/>
            <person name="Vanstreels E."/>
            <person name="Rieger M."/>
            <person name="Schaefer M."/>
            <person name="Mueller-Auer S."/>
            <person name="Gabel C."/>
            <person name="Fuchs M."/>
            <person name="Duesterhoeft A."/>
            <person name="Fritzc C."/>
            <person name="Holzer E."/>
            <person name="Moestl D."/>
            <person name="Hilbert H."/>
            <person name="Borzym K."/>
            <person name="Langer I."/>
            <person name="Beck A."/>
            <person name="Lehrach H."/>
            <person name="Reinhardt R."/>
            <person name="Pohl T.M."/>
            <person name="Eger P."/>
            <person name="Zimmermann W."/>
            <person name="Wedler H."/>
            <person name="Wambutt R."/>
            <person name="Purnelle B."/>
            <person name="Goffeau A."/>
            <person name="Cadieu E."/>
            <person name="Dreano S."/>
            <person name="Gloux S."/>
            <person name="Lelaure V."/>
            <person name="Mottier S."/>
            <person name="Galibert F."/>
            <person name="Aves S.J."/>
            <person name="Xiang Z."/>
            <person name="Hunt C."/>
            <person name="Moore K."/>
            <person name="Hurst S.M."/>
            <person name="Lucas M."/>
            <person name="Rochet M."/>
            <person name="Gaillardin C."/>
            <person name="Tallada V.A."/>
            <person name="Garzon A."/>
            <person name="Thode G."/>
            <person name="Daga R.R."/>
            <person name="Cruzado L."/>
            <person name="Jimenez J."/>
            <person name="Sanchez M."/>
            <person name="del Rey F."/>
            <person name="Benito J."/>
            <person name="Dominguez A."/>
            <person name="Revuelta J.L."/>
            <person name="Moreno S."/>
            <person name="Armstrong J."/>
            <person name="Forsburg S.L."/>
            <person name="Cerutti L."/>
            <person name="Lowe T."/>
            <person name="McCombie W.R."/>
            <person name="Paulsen I."/>
            <person name="Potashkin J."/>
            <person name="Shpakovski G.V."/>
            <person name="Ussery D."/>
            <person name="Barrell B.G."/>
            <person name="Nurse P."/>
        </authorList>
    </citation>
    <scope>NUCLEOTIDE SEQUENCE [LARGE SCALE GENOMIC DNA]</scope>
    <source>
        <strain>972 / ATCC 24843</strain>
    </source>
</reference>
<reference key="2">
    <citation type="journal article" date="2006" name="Nat. Biotechnol.">
        <title>ORFeome cloning and global analysis of protein localization in the fission yeast Schizosaccharomyces pombe.</title>
        <authorList>
            <person name="Matsuyama A."/>
            <person name="Arai R."/>
            <person name="Yashiroda Y."/>
            <person name="Shirai A."/>
            <person name="Kamata A."/>
            <person name="Sekido S."/>
            <person name="Kobayashi Y."/>
            <person name="Hashimoto A."/>
            <person name="Hamamoto M."/>
            <person name="Hiraoka Y."/>
            <person name="Horinouchi S."/>
            <person name="Yoshida M."/>
        </authorList>
    </citation>
    <scope>SUBCELLULAR LOCATION [LARGE SCALE ANALYSIS]</scope>
</reference>
<sequence length="93" mass="10490">MFWTSVARARSVWKGPNVVDFGVNVQQCIKGNVPIKTAVRSATILPRMVGAQFMVHNGKSYANVKITEDMIGHKLGEFAPTRKAFHYRQTKNR</sequence>
<protein>
    <recommendedName>
        <fullName evidence="3">Small ribosomal subunit protein uS19m</fullName>
    </recommendedName>
    <alternativeName>
        <fullName>37S ribosomal protein S19, mitochondrial</fullName>
    </alternativeName>
</protein>
<gene>
    <name type="primary">rsm19</name>
    <name type="ORF">SPAC1751.02c</name>
</gene>
<feature type="chain" id="PRO_0000130024" description="Small ribosomal subunit protein uS19m">
    <location>
        <begin position="1"/>
        <end position="93"/>
    </location>
</feature>
<proteinExistence type="inferred from homology"/>
<evidence type="ECO:0000250" key="1">
    <source>
        <dbReference type="UniProtKB" id="P53733"/>
    </source>
</evidence>
<evidence type="ECO:0000269" key="2">
    <source>
    </source>
</evidence>
<evidence type="ECO:0000305" key="3"/>
<keyword id="KW-0496">Mitochondrion</keyword>
<keyword id="KW-1185">Reference proteome</keyword>
<keyword id="KW-0687">Ribonucleoprotein</keyword>
<keyword id="KW-0689">Ribosomal protein</keyword>
<organism>
    <name type="scientific">Schizosaccharomyces pombe (strain 972 / ATCC 24843)</name>
    <name type="common">Fission yeast</name>
    <dbReference type="NCBI Taxonomy" id="284812"/>
    <lineage>
        <taxon>Eukaryota</taxon>
        <taxon>Fungi</taxon>
        <taxon>Dikarya</taxon>
        <taxon>Ascomycota</taxon>
        <taxon>Taphrinomycotina</taxon>
        <taxon>Schizosaccharomycetes</taxon>
        <taxon>Schizosaccharomycetales</taxon>
        <taxon>Schizosaccharomycetaceae</taxon>
        <taxon>Schizosaccharomyces</taxon>
    </lineage>
</organism>
<dbReference type="EMBL" id="CU329670">
    <property type="protein sequence ID" value="CAB61448.2"/>
    <property type="molecule type" value="Genomic_DNA"/>
</dbReference>
<dbReference type="PIR" id="T50089">
    <property type="entry name" value="T50089"/>
</dbReference>
<dbReference type="RefSeq" id="NP_592912.2">
    <property type="nucleotide sequence ID" value="NM_001018313.3"/>
</dbReference>
<dbReference type="SMR" id="Q9US30"/>
<dbReference type="ComplexPortal" id="CPX-10315">
    <property type="entry name" value="37S mitochondrial small ribosomal subunit"/>
</dbReference>
<dbReference type="FunCoup" id="Q9US30">
    <property type="interactions" value="48"/>
</dbReference>
<dbReference type="STRING" id="284812.Q9US30"/>
<dbReference type="PaxDb" id="4896-SPAC1751.02c.1"/>
<dbReference type="EnsemblFungi" id="SPAC1751.02c.1">
    <property type="protein sequence ID" value="SPAC1751.02c.1:pep"/>
    <property type="gene ID" value="SPAC1751.02c"/>
</dbReference>
<dbReference type="GeneID" id="2542342"/>
<dbReference type="KEGG" id="spo:2542342"/>
<dbReference type="PomBase" id="SPAC1751.02c">
    <property type="gene designation" value="rsm19"/>
</dbReference>
<dbReference type="VEuPathDB" id="FungiDB:SPAC1751.02c"/>
<dbReference type="eggNOG" id="KOG0899">
    <property type="taxonomic scope" value="Eukaryota"/>
</dbReference>
<dbReference type="HOGENOM" id="CLU_144911_1_2_1"/>
<dbReference type="InParanoid" id="Q9US30"/>
<dbReference type="OMA" id="EYVAFEV"/>
<dbReference type="PhylomeDB" id="Q9US30"/>
<dbReference type="PRO" id="PR:Q9US30"/>
<dbReference type="Proteomes" id="UP000002485">
    <property type="component" value="Chromosome I"/>
</dbReference>
<dbReference type="GO" id="GO:0005763">
    <property type="term" value="C:mitochondrial small ribosomal subunit"/>
    <property type="evidence" value="ECO:0000318"/>
    <property type="project" value="GO_Central"/>
</dbReference>
<dbReference type="GO" id="GO:0005739">
    <property type="term" value="C:mitochondrion"/>
    <property type="evidence" value="ECO:0007005"/>
    <property type="project" value="PomBase"/>
</dbReference>
<dbReference type="GO" id="GO:0003723">
    <property type="term" value="F:RNA binding"/>
    <property type="evidence" value="ECO:0007669"/>
    <property type="project" value="InterPro"/>
</dbReference>
<dbReference type="GO" id="GO:0003735">
    <property type="term" value="F:structural constituent of ribosome"/>
    <property type="evidence" value="ECO:0000318"/>
    <property type="project" value="GO_Central"/>
</dbReference>
<dbReference type="GO" id="GO:0032543">
    <property type="term" value="P:mitochondrial translation"/>
    <property type="evidence" value="ECO:0000250"/>
    <property type="project" value="PomBase"/>
</dbReference>
<dbReference type="GO" id="GO:0000028">
    <property type="term" value="P:ribosomal small subunit assembly"/>
    <property type="evidence" value="ECO:0000318"/>
    <property type="project" value="GO_Central"/>
</dbReference>
<dbReference type="FunFam" id="3.30.860.10:FF:000001">
    <property type="entry name" value="30S ribosomal protein S19"/>
    <property type="match status" value="1"/>
</dbReference>
<dbReference type="Gene3D" id="3.30.860.10">
    <property type="entry name" value="30s Ribosomal Protein S19, Chain A"/>
    <property type="match status" value="1"/>
</dbReference>
<dbReference type="HAMAP" id="MF_00531">
    <property type="entry name" value="Ribosomal_uS19"/>
    <property type="match status" value="1"/>
</dbReference>
<dbReference type="InterPro" id="IPR002222">
    <property type="entry name" value="Ribosomal_uS19"/>
</dbReference>
<dbReference type="InterPro" id="IPR020934">
    <property type="entry name" value="Ribosomal_uS19_CS"/>
</dbReference>
<dbReference type="InterPro" id="IPR023575">
    <property type="entry name" value="Ribosomal_uS19_SF"/>
</dbReference>
<dbReference type="PANTHER" id="PTHR11880">
    <property type="entry name" value="RIBOSOMAL PROTEIN S19P FAMILY MEMBER"/>
    <property type="match status" value="1"/>
</dbReference>
<dbReference type="PANTHER" id="PTHR11880:SF8">
    <property type="entry name" value="SMALL RIBOSOMAL SUBUNIT PROTEIN US19M"/>
    <property type="match status" value="1"/>
</dbReference>
<dbReference type="Pfam" id="PF00203">
    <property type="entry name" value="Ribosomal_S19"/>
    <property type="match status" value="1"/>
</dbReference>
<dbReference type="PIRSF" id="PIRSF002144">
    <property type="entry name" value="Ribosomal_S19"/>
    <property type="match status" value="1"/>
</dbReference>
<dbReference type="PRINTS" id="PR00975">
    <property type="entry name" value="RIBOSOMALS19"/>
</dbReference>
<dbReference type="SUPFAM" id="SSF54570">
    <property type="entry name" value="Ribosomal protein S19"/>
    <property type="match status" value="1"/>
</dbReference>
<dbReference type="PROSITE" id="PS00323">
    <property type="entry name" value="RIBOSOMAL_S19"/>
    <property type="match status" value="1"/>
</dbReference>
<name>RT19_SCHPO</name>